<organism>
    <name type="scientific">Loxosceles deserta</name>
    <name type="common">Desert recluse spider</name>
    <dbReference type="NCBI Taxonomy" id="424440"/>
    <lineage>
        <taxon>Eukaryota</taxon>
        <taxon>Metazoa</taxon>
        <taxon>Ecdysozoa</taxon>
        <taxon>Arthropoda</taxon>
        <taxon>Chelicerata</taxon>
        <taxon>Arachnida</taxon>
        <taxon>Araneae</taxon>
        <taxon>Araneomorphae</taxon>
        <taxon>Haplogynae</taxon>
        <taxon>Scytodoidea</taxon>
        <taxon>Sicariidae</taxon>
        <taxon>Loxosceles</taxon>
    </lineage>
</organism>
<accession>C0JAX2</accession>
<keyword id="KW-0204">Cytolysis</keyword>
<keyword id="KW-1061">Dermonecrotic toxin</keyword>
<keyword id="KW-1015">Disulfide bond</keyword>
<keyword id="KW-0354">Hemolysis</keyword>
<keyword id="KW-0442">Lipid degradation</keyword>
<keyword id="KW-0443">Lipid metabolism</keyword>
<keyword id="KW-0456">Lyase</keyword>
<keyword id="KW-0460">Magnesium</keyword>
<keyword id="KW-0479">Metal-binding</keyword>
<keyword id="KW-0964">Secreted</keyword>
<keyword id="KW-0800">Toxin</keyword>
<comment type="function">
    <text evidence="1 3">Dermonecrotic toxins cleave the phosphodiester linkage between the phosphate and headgroup of certain phospholipids (sphingolipid and lysolipid substrates), forming an alcohol (often choline) and a cyclic phosphate (By similarity). This toxin acts on sphingomyelin (SM) (By similarity). It may also act on ceramide phosphoethanolamine (CPE), lysophosphatidylcholine (LPC) and lysophosphatidylethanolamine (LPE), but not on lysophosphatidylserine (LPS), and lysophosphatidylglycerol (LPG) (By similarity). It acts by transphosphatidylation, releasing exclusively cyclic phosphate products as second products (By similarity). Induces dermonecrosis, hemolysis, increased vascular permeability, edema, inflammatory response, and platelet aggregation (By similarity).</text>
</comment>
<comment type="catalytic activity">
    <reaction evidence="1">
        <text>an N-(acyl)-sphingosylphosphocholine = an N-(acyl)-sphingosyl-1,3-cyclic phosphate + choline</text>
        <dbReference type="Rhea" id="RHEA:60652"/>
        <dbReference type="ChEBI" id="CHEBI:15354"/>
        <dbReference type="ChEBI" id="CHEBI:64583"/>
        <dbReference type="ChEBI" id="CHEBI:143892"/>
    </reaction>
</comment>
<comment type="catalytic activity">
    <reaction evidence="1">
        <text>an N-(acyl)-sphingosylphosphoethanolamine = an N-(acyl)-sphingosyl-1,3-cyclic phosphate + ethanolamine</text>
        <dbReference type="Rhea" id="RHEA:60648"/>
        <dbReference type="ChEBI" id="CHEBI:57603"/>
        <dbReference type="ChEBI" id="CHEBI:143891"/>
        <dbReference type="ChEBI" id="CHEBI:143892"/>
    </reaction>
</comment>
<comment type="catalytic activity">
    <reaction evidence="1">
        <text>a 1-acyl-sn-glycero-3-phosphocholine = a 1-acyl-sn-glycero-2,3-cyclic phosphate + choline</text>
        <dbReference type="Rhea" id="RHEA:60700"/>
        <dbReference type="ChEBI" id="CHEBI:15354"/>
        <dbReference type="ChEBI" id="CHEBI:58168"/>
        <dbReference type="ChEBI" id="CHEBI:143947"/>
    </reaction>
</comment>
<comment type="catalytic activity">
    <reaction evidence="1">
        <text>a 1-acyl-sn-glycero-3-phosphoethanolamine = a 1-acyl-sn-glycero-2,3-cyclic phosphate + ethanolamine</text>
        <dbReference type="Rhea" id="RHEA:60704"/>
        <dbReference type="ChEBI" id="CHEBI:57603"/>
        <dbReference type="ChEBI" id="CHEBI:64381"/>
        <dbReference type="ChEBI" id="CHEBI:143947"/>
    </reaction>
</comment>
<comment type="cofactor">
    <cofactor evidence="5">
        <name>Mg(2+)</name>
        <dbReference type="ChEBI" id="CHEBI:18420"/>
    </cofactor>
    <text evidence="5">Binds 1 Mg(2+) ion per subunit.</text>
</comment>
<comment type="subcellular location">
    <subcellularLocation>
        <location evidence="8">Secreted</location>
    </subcellularLocation>
</comment>
<comment type="tissue specificity">
    <text evidence="8">Expressed by the venom gland.</text>
</comment>
<comment type="similarity">
    <text evidence="7">Belongs to the arthropod phospholipase D family. Class II subfamily.</text>
</comment>
<comment type="caution">
    <text evidence="1 2 4">The most common activity assay for dermonecrotic toxins detects enzymatic activity by monitoring choline release from substrate. Liberation of choline from sphingomyelin (SM) or lysophosphatidylcholine (LPC) is commonly assumed to result from substrate hydrolysis, giving either ceramide-1-phosphate (C1P) or lysophosphatidic acid (LPA), respectively, as a second product. However, two studies from Lajoie and colleagues (2013 and 2015) report the observation of exclusive formation of cyclic phosphate products as second products, resulting from intramolecular transphosphatidylation. Cyclic phosphates have vastly different biological properties from their monoester counterparts, and they may be relevant to the pathology of brown spider envenomation.</text>
</comment>
<feature type="chain" id="PRO_0000392805" description="Dermonecrotic toxin LdSicTox-alphaIB3b">
    <location>
        <begin position="1" status="less than"/>
        <end position="273"/>
    </location>
</feature>
<feature type="active site" evidence="5">
    <location>
        <position position="5"/>
    </location>
</feature>
<feature type="active site" description="Nucleophile" evidence="5">
    <location>
        <position position="41"/>
    </location>
</feature>
<feature type="binding site" evidence="5">
    <location>
        <position position="25"/>
    </location>
    <ligand>
        <name>Mg(2+)</name>
        <dbReference type="ChEBI" id="CHEBI:18420"/>
    </ligand>
</feature>
<feature type="binding site" evidence="5">
    <location>
        <position position="27"/>
    </location>
    <ligand>
        <name>Mg(2+)</name>
        <dbReference type="ChEBI" id="CHEBI:18420"/>
    </ligand>
</feature>
<feature type="binding site" evidence="5">
    <location>
        <position position="85"/>
    </location>
    <ligand>
        <name>Mg(2+)</name>
        <dbReference type="ChEBI" id="CHEBI:18420"/>
    </ligand>
</feature>
<feature type="disulfide bond" evidence="3">
    <location>
        <begin position="45"/>
        <end position="51"/>
    </location>
</feature>
<feature type="disulfide bond" evidence="3">
    <location>
        <begin position="47"/>
        <end position="190"/>
    </location>
</feature>
<feature type="non-terminal residue">
    <location>
        <position position="1"/>
    </location>
</feature>
<sequence>WIMGHMVNAIAQIDEFVNLGANSIETDVSFDKNANPEYTYHGIPCDCGRTCTKSEKFNDFLQGLQKATTPGDSKYQEKLVLVVFDLKSSSLYDNQASDAGKKLAKSLLQNYWKNGNNGGRAYIVLSIPNLAHYKLITGFKETLKTEGHPELMEKVGYDFSGNDDIDQVAKAYKKAGVTGHVWQSDGITNCLPRGLDRVKQAVANRDSSNGFINKVYYWTVDKRSTTRGALDAGVDGVMTNYPDVIADVLSESAYKSKFRIATYEDNPWETFKN</sequence>
<name>A1MB_LOXDE</name>
<protein>
    <recommendedName>
        <fullName evidence="6">Dermonecrotic toxin LdSicTox-alphaIB3b</fullName>
        <ecNumber evidence="4">4.6.1.-</ecNumber>
    </recommendedName>
    <alternativeName>
        <fullName>Phospholipase D</fullName>
        <shortName>PLD</shortName>
    </alternativeName>
    <alternativeName>
        <fullName>Sphingomyelin phosphodiesterase D</fullName>
        <shortName>SMD</shortName>
        <shortName>SMase D</shortName>
        <shortName>Sphingomyelinase D</shortName>
    </alternativeName>
</protein>
<reference key="1">
    <citation type="journal article" date="2009" name="Mol. Biol. Evol.">
        <title>Molecular evolution, functional variation, and proposed nomenclature of the gene family that includes sphingomyelinase D in sicariid spider venoms.</title>
        <authorList>
            <person name="Binford G.J."/>
            <person name="Bodner M.R."/>
            <person name="Cordes M.H."/>
            <person name="Baldwin K.L."/>
            <person name="Rynerson M.R."/>
            <person name="Burns S.N."/>
            <person name="Zobel-Thropp P.A."/>
        </authorList>
    </citation>
    <scope>NUCLEOTIDE SEQUENCE [MRNA]</scope>
    <scope>NOMENCLATURE</scope>
    <source>
        <tissue>Venom gland</tissue>
    </source>
</reference>
<dbReference type="EC" id="4.6.1.-" evidence="4"/>
<dbReference type="EMBL" id="FJ171407">
    <property type="protein sequence ID" value="ACN48903.1"/>
    <property type="molecule type" value="mRNA"/>
</dbReference>
<dbReference type="SMR" id="C0JAX2"/>
<dbReference type="GO" id="GO:0005576">
    <property type="term" value="C:extracellular region"/>
    <property type="evidence" value="ECO:0007669"/>
    <property type="project" value="UniProtKB-SubCell"/>
</dbReference>
<dbReference type="GO" id="GO:0016829">
    <property type="term" value="F:lyase activity"/>
    <property type="evidence" value="ECO:0007669"/>
    <property type="project" value="UniProtKB-KW"/>
</dbReference>
<dbReference type="GO" id="GO:0046872">
    <property type="term" value="F:metal ion binding"/>
    <property type="evidence" value="ECO:0007669"/>
    <property type="project" value="UniProtKB-KW"/>
</dbReference>
<dbReference type="GO" id="GO:0008081">
    <property type="term" value="F:phosphoric diester hydrolase activity"/>
    <property type="evidence" value="ECO:0007669"/>
    <property type="project" value="InterPro"/>
</dbReference>
<dbReference type="GO" id="GO:0090729">
    <property type="term" value="F:toxin activity"/>
    <property type="evidence" value="ECO:0007669"/>
    <property type="project" value="UniProtKB-KW"/>
</dbReference>
<dbReference type="GO" id="GO:0031640">
    <property type="term" value="P:killing of cells of another organism"/>
    <property type="evidence" value="ECO:0007669"/>
    <property type="project" value="UniProtKB-KW"/>
</dbReference>
<dbReference type="GO" id="GO:0016042">
    <property type="term" value="P:lipid catabolic process"/>
    <property type="evidence" value="ECO:0007669"/>
    <property type="project" value="UniProtKB-KW"/>
</dbReference>
<dbReference type="CDD" id="cd08576">
    <property type="entry name" value="GDPD_like_SMaseD_PLD"/>
    <property type="match status" value="1"/>
</dbReference>
<dbReference type="Gene3D" id="3.20.20.190">
    <property type="entry name" value="Phosphatidylinositol (PI) phosphodiesterase"/>
    <property type="match status" value="1"/>
</dbReference>
<dbReference type="InterPro" id="IPR017946">
    <property type="entry name" value="PLC-like_Pdiesterase_TIM-brl"/>
</dbReference>
<dbReference type="Pfam" id="PF13653">
    <property type="entry name" value="GDPD_2"/>
    <property type="match status" value="1"/>
</dbReference>
<dbReference type="SUPFAM" id="SSF51695">
    <property type="entry name" value="PLC-like phosphodiesterases"/>
    <property type="match status" value="1"/>
</dbReference>
<evidence type="ECO:0000250" key="1">
    <source>
        <dbReference type="UniProtKB" id="A0A0D4WTV1"/>
    </source>
</evidence>
<evidence type="ECO:0000250" key="2">
    <source>
        <dbReference type="UniProtKB" id="A0A0D4WV12"/>
    </source>
</evidence>
<evidence type="ECO:0000250" key="3">
    <source>
        <dbReference type="UniProtKB" id="P0CE80"/>
    </source>
</evidence>
<evidence type="ECO:0000250" key="4">
    <source>
        <dbReference type="UniProtKB" id="Q4ZFU2"/>
    </source>
</evidence>
<evidence type="ECO:0000250" key="5">
    <source>
        <dbReference type="UniProtKB" id="Q8I914"/>
    </source>
</evidence>
<evidence type="ECO:0000303" key="6">
    <source>
    </source>
</evidence>
<evidence type="ECO:0000305" key="7"/>
<evidence type="ECO:0000305" key="8">
    <source>
    </source>
</evidence>
<proteinExistence type="evidence at transcript level"/>